<evidence type="ECO:0000255" key="1">
    <source>
        <dbReference type="HAMAP-Rule" id="MF_01147"/>
    </source>
</evidence>
<dbReference type="EC" id="2.5.1.145" evidence="1"/>
<dbReference type="EMBL" id="AE014291">
    <property type="protein sequence ID" value="AAN30438.1"/>
    <property type="molecule type" value="Genomic_DNA"/>
</dbReference>
<dbReference type="EMBL" id="CP002997">
    <property type="protein sequence ID" value="AEM18854.1"/>
    <property type="molecule type" value="Genomic_DNA"/>
</dbReference>
<dbReference type="PIR" id="AB3313">
    <property type="entry name" value="AB3313"/>
</dbReference>
<dbReference type="RefSeq" id="WP_002966912.1">
    <property type="nucleotide sequence ID" value="NZ_KN046804.1"/>
</dbReference>
<dbReference type="SMR" id="Q8FZF5"/>
<dbReference type="GeneID" id="97533286"/>
<dbReference type="KEGG" id="bms:BR1528"/>
<dbReference type="KEGG" id="bsi:BS1330_I1522"/>
<dbReference type="PATRIC" id="fig|204722.21.peg.1815"/>
<dbReference type="HOGENOM" id="CLU_013386_1_0_5"/>
<dbReference type="PhylomeDB" id="Q8FZF5"/>
<dbReference type="UniPathway" id="UPA00664"/>
<dbReference type="Proteomes" id="UP000007104">
    <property type="component" value="Chromosome I"/>
</dbReference>
<dbReference type="GO" id="GO:0005886">
    <property type="term" value="C:plasma membrane"/>
    <property type="evidence" value="ECO:0007669"/>
    <property type="project" value="UniProtKB-SubCell"/>
</dbReference>
<dbReference type="GO" id="GO:0008961">
    <property type="term" value="F:phosphatidylglycerol-prolipoprotein diacylglyceryl transferase activity"/>
    <property type="evidence" value="ECO:0007669"/>
    <property type="project" value="UniProtKB-UniRule"/>
</dbReference>
<dbReference type="GO" id="GO:0042158">
    <property type="term" value="P:lipoprotein biosynthetic process"/>
    <property type="evidence" value="ECO:0007669"/>
    <property type="project" value="UniProtKB-UniRule"/>
</dbReference>
<dbReference type="HAMAP" id="MF_01147">
    <property type="entry name" value="Lgt"/>
    <property type="match status" value="1"/>
</dbReference>
<dbReference type="InterPro" id="IPR001640">
    <property type="entry name" value="Lgt"/>
</dbReference>
<dbReference type="NCBIfam" id="TIGR00544">
    <property type="entry name" value="lgt"/>
    <property type="match status" value="1"/>
</dbReference>
<dbReference type="PANTHER" id="PTHR30589:SF0">
    <property type="entry name" value="PHOSPHATIDYLGLYCEROL--PROLIPOPROTEIN DIACYLGLYCERYL TRANSFERASE"/>
    <property type="match status" value="1"/>
</dbReference>
<dbReference type="PANTHER" id="PTHR30589">
    <property type="entry name" value="PROLIPOPROTEIN DIACYLGLYCERYL TRANSFERASE"/>
    <property type="match status" value="1"/>
</dbReference>
<dbReference type="Pfam" id="PF01790">
    <property type="entry name" value="LGT"/>
    <property type="match status" value="1"/>
</dbReference>
<protein>
    <recommendedName>
        <fullName evidence="1">Phosphatidylglycerol--prolipoprotein diacylglyceryl transferase</fullName>
        <ecNumber evidence="1">2.5.1.145</ecNumber>
    </recommendedName>
</protein>
<reference key="1">
    <citation type="journal article" date="2002" name="Proc. Natl. Acad. Sci. U.S.A.">
        <title>The Brucella suis genome reveals fundamental similarities between animal and plant pathogens and symbionts.</title>
        <authorList>
            <person name="Paulsen I.T."/>
            <person name="Seshadri R."/>
            <person name="Nelson K.E."/>
            <person name="Eisen J.A."/>
            <person name="Heidelberg J.F."/>
            <person name="Read T.D."/>
            <person name="Dodson R.J."/>
            <person name="Umayam L.A."/>
            <person name="Brinkac L.M."/>
            <person name="Beanan M.J."/>
            <person name="Daugherty S.C."/>
            <person name="DeBoy R.T."/>
            <person name="Durkin A.S."/>
            <person name="Kolonay J.F."/>
            <person name="Madupu R."/>
            <person name="Nelson W.C."/>
            <person name="Ayodeji B."/>
            <person name="Kraul M."/>
            <person name="Shetty J."/>
            <person name="Malek J.A."/>
            <person name="Van Aken S.E."/>
            <person name="Riedmuller S."/>
            <person name="Tettelin H."/>
            <person name="Gill S.R."/>
            <person name="White O."/>
            <person name="Salzberg S.L."/>
            <person name="Hoover D.L."/>
            <person name="Lindler L.E."/>
            <person name="Halling S.M."/>
            <person name="Boyle S.M."/>
            <person name="Fraser C.M."/>
        </authorList>
    </citation>
    <scope>NUCLEOTIDE SEQUENCE [LARGE SCALE GENOMIC DNA]</scope>
    <source>
        <strain>1330</strain>
    </source>
</reference>
<reference key="2">
    <citation type="journal article" date="2011" name="J. Bacteriol.">
        <title>Revised genome sequence of Brucella suis 1330.</title>
        <authorList>
            <person name="Tae H."/>
            <person name="Shallom S."/>
            <person name="Settlage R."/>
            <person name="Preston D."/>
            <person name="Adams L.G."/>
            <person name="Garner H.R."/>
        </authorList>
    </citation>
    <scope>NUCLEOTIDE SEQUENCE [LARGE SCALE GENOMIC DNA]</scope>
    <source>
        <strain>1330</strain>
    </source>
</reference>
<keyword id="KW-0997">Cell inner membrane</keyword>
<keyword id="KW-1003">Cell membrane</keyword>
<keyword id="KW-0472">Membrane</keyword>
<keyword id="KW-0808">Transferase</keyword>
<keyword id="KW-0812">Transmembrane</keyword>
<keyword id="KW-1133">Transmembrane helix</keyword>
<accession>Q8FZF5</accession>
<accession>G0KC12</accession>
<comment type="function">
    <text evidence="1">Catalyzes the transfer of the diacylglyceryl group from phosphatidylglycerol to the sulfhydryl group of the N-terminal cysteine of a prolipoprotein, the first step in the formation of mature lipoproteins.</text>
</comment>
<comment type="catalytic activity">
    <reaction evidence="1">
        <text>L-cysteinyl-[prolipoprotein] + a 1,2-diacyl-sn-glycero-3-phospho-(1'-sn-glycerol) = an S-1,2-diacyl-sn-glyceryl-L-cysteinyl-[prolipoprotein] + sn-glycerol 1-phosphate + H(+)</text>
        <dbReference type="Rhea" id="RHEA:56712"/>
        <dbReference type="Rhea" id="RHEA-COMP:14679"/>
        <dbReference type="Rhea" id="RHEA-COMP:14680"/>
        <dbReference type="ChEBI" id="CHEBI:15378"/>
        <dbReference type="ChEBI" id="CHEBI:29950"/>
        <dbReference type="ChEBI" id="CHEBI:57685"/>
        <dbReference type="ChEBI" id="CHEBI:64716"/>
        <dbReference type="ChEBI" id="CHEBI:140658"/>
        <dbReference type="EC" id="2.5.1.145"/>
    </reaction>
</comment>
<comment type="pathway">
    <text evidence="1">Protein modification; lipoprotein biosynthesis (diacylglyceryl transfer).</text>
</comment>
<comment type="subcellular location">
    <subcellularLocation>
        <location evidence="1">Cell inner membrane</location>
        <topology evidence="1">Multi-pass membrane protein</topology>
    </subcellularLocation>
</comment>
<comment type="similarity">
    <text evidence="1">Belongs to the Lgt family.</text>
</comment>
<feature type="chain" id="PRO_0000172569" description="Phosphatidylglycerol--prolipoprotein diacylglyceryl transferase">
    <location>
        <begin position="1"/>
        <end position="281"/>
    </location>
</feature>
<feature type="transmembrane region" description="Helical" evidence="1">
    <location>
        <begin position="23"/>
        <end position="43"/>
    </location>
</feature>
<feature type="transmembrane region" description="Helical" evidence="1">
    <location>
        <begin position="71"/>
        <end position="91"/>
    </location>
</feature>
<feature type="transmembrane region" description="Helical" evidence="1">
    <location>
        <begin position="107"/>
        <end position="127"/>
    </location>
</feature>
<feature type="transmembrane region" description="Helical" evidence="1">
    <location>
        <begin position="133"/>
        <end position="153"/>
    </location>
</feature>
<feature type="transmembrane region" description="Helical" evidence="1">
    <location>
        <begin position="189"/>
        <end position="209"/>
    </location>
</feature>
<feature type="transmembrane region" description="Helical" evidence="1">
    <location>
        <begin position="217"/>
        <end position="237"/>
    </location>
</feature>
<feature type="transmembrane region" description="Helical" evidence="1">
    <location>
        <begin position="247"/>
        <end position="267"/>
    </location>
</feature>
<feature type="binding site" evidence="1">
    <location>
        <position position="154"/>
    </location>
    <ligand>
        <name>a 1,2-diacyl-sn-glycero-3-phospho-(1'-sn-glycerol)</name>
        <dbReference type="ChEBI" id="CHEBI:64716"/>
    </ligand>
</feature>
<name>LGT_BRUSU</name>
<gene>
    <name evidence="1" type="primary">lgt</name>
    <name type="ordered locus">BR1528</name>
    <name type="ordered locus">BS1330_I1522</name>
</gene>
<proteinExistence type="inferred from homology"/>
<sequence length="281" mass="31001">MIETLLPASALAFPAIDPVIFRVGPLAVHWYGLGYVVGILFAWWYGKKLLRSHRLWANNQPPMAPEALDDFVIWAALGVVLGGRIGYVLFYNFSYYISNPLAIPALWDGGMSFHGGILGTTLAMILFARSRGILVWSMFDTIAAGVPIGLGVVRVANFINSELWGRVSDVPWAVYFPNGGPLPRHPSQLYEAFLEGLVLFFVLFVLVWGARKLKQPGFVAGAFVTGYGLSRIAVEFFREPDAQIGYLFGGWLTMGMVLSVPMVLLGLWAMWRANRAAARNA</sequence>
<organism>
    <name type="scientific">Brucella suis biovar 1 (strain 1330)</name>
    <dbReference type="NCBI Taxonomy" id="204722"/>
    <lineage>
        <taxon>Bacteria</taxon>
        <taxon>Pseudomonadati</taxon>
        <taxon>Pseudomonadota</taxon>
        <taxon>Alphaproteobacteria</taxon>
        <taxon>Hyphomicrobiales</taxon>
        <taxon>Brucellaceae</taxon>
        <taxon>Brucella/Ochrobactrum group</taxon>
        <taxon>Brucella</taxon>
    </lineage>
</organism>